<organism>
    <name type="scientific">Escherichia coli O157:H7</name>
    <dbReference type="NCBI Taxonomy" id="83334"/>
    <lineage>
        <taxon>Bacteria</taxon>
        <taxon>Pseudomonadati</taxon>
        <taxon>Pseudomonadota</taxon>
        <taxon>Gammaproteobacteria</taxon>
        <taxon>Enterobacterales</taxon>
        <taxon>Enterobacteriaceae</taxon>
        <taxon>Escherichia</taxon>
    </lineage>
</organism>
<name>ACCC_ECO57</name>
<gene>
    <name type="primary">accC</name>
    <name type="ordered locus">Z4616</name>
    <name type="ordered locus">ECs4128</name>
</gene>
<reference key="1">
    <citation type="journal article" date="2001" name="Nature">
        <title>Genome sequence of enterohaemorrhagic Escherichia coli O157:H7.</title>
        <authorList>
            <person name="Perna N.T."/>
            <person name="Plunkett G. III"/>
            <person name="Burland V."/>
            <person name="Mau B."/>
            <person name="Glasner J.D."/>
            <person name="Rose D.J."/>
            <person name="Mayhew G.F."/>
            <person name="Evans P.S."/>
            <person name="Gregor J."/>
            <person name="Kirkpatrick H.A."/>
            <person name="Posfai G."/>
            <person name="Hackett J."/>
            <person name="Klink S."/>
            <person name="Boutin A."/>
            <person name="Shao Y."/>
            <person name="Miller L."/>
            <person name="Grotbeck E.J."/>
            <person name="Davis N.W."/>
            <person name="Lim A."/>
            <person name="Dimalanta E.T."/>
            <person name="Potamousis K."/>
            <person name="Apodaca J."/>
            <person name="Anantharaman T.S."/>
            <person name="Lin J."/>
            <person name="Yen G."/>
            <person name="Schwartz D.C."/>
            <person name="Welch R.A."/>
            <person name="Blattner F.R."/>
        </authorList>
    </citation>
    <scope>NUCLEOTIDE SEQUENCE [LARGE SCALE GENOMIC DNA]</scope>
    <source>
        <strain>O157:H7 / EDL933 / ATCC 700927 / EHEC</strain>
    </source>
</reference>
<reference key="2">
    <citation type="journal article" date="2001" name="DNA Res.">
        <title>Complete genome sequence of enterohemorrhagic Escherichia coli O157:H7 and genomic comparison with a laboratory strain K-12.</title>
        <authorList>
            <person name="Hayashi T."/>
            <person name="Makino K."/>
            <person name="Ohnishi M."/>
            <person name="Kurokawa K."/>
            <person name="Ishii K."/>
            <person name="Yokoyama K."/>
            <person name="Han C.-G."/>
            <person name="Ohtsubo E."/>
            <person name="Nakayama K."/>
            <person name="Murata T."/>
            <person name="Tanaka M."/>
            <person name="Tobe T."/>
            <person name="Iida T."/>
            <person name="Takami H."/>
            <person name="Honda T."/>
            <person name="Sasakawa C."/>
            <person name="Ogasawara N."/>
            <person name="Yasunaga T."/>
            <person name="Kuhara S."/>
            <person name="Shiba T."/>
            <person name="Hattori M."/>
            <person name="Shinagawa H."/>
        </authorList>
    </citation>
    <scope>NUCLEOTIDE SEQUENCE [LARGE SCALE GENOMIC DNA]</scope>
    <source>
        <strain>O157:H7 / Sakai / RIMD 0509952 / EHEC</strain>
    </source>
</reference>
<dbReference type="EC" id="6.3.4.14" evidence="1"/>
<dbReference type="EMBL" id="AE005174">
    <property type="protein sequence ID" value="AAG58384.1"/>
    <property type="molecule type" value="Genomic_DNA"/>
</dbReference>
<dbReference type="EMBL" id="BA000007">
    <property type="protein sequence ID" value="BAB37551.1"/>
    <property type="molecule type" value="Genomic_DNA"/>
</dbReference>
<dbReference type="PIR" id="D85990">
    <property type="entry name" value="D85990"/>
</dbReference>
<dbReference type="PIR" id="H91144">
    <property type="entry name" value="H91144"/>
</dbReference>
<dbReference type="RefSeq" id="NP_312155.1">
    <property type="nucleotide sequence ID" value="NC_002695.1"/>
</dbReference>
<dbReference type="RefSeq" id="WP_000884642.1">
    <property type="nucleotide sequence ID" value="NZ_VOAI01000014.1"/>
</dbReference>
<dbReference type="SMR" id="Q8X9B6"/>
<dbReference type="STRING" id="155864.Z4616"/>
<dbReference type="GeneID" id="916024"/>
<dbReference type="KEGG" id="ece:Z4616"/>
<dbReference type="KEGG" id="ecs:ECs_4128"/>
<dbReference type="PATRIC" id="fig|386585.9.peg.4311"/>
<dbReference type="eggNOG" id="COG0439">
    <property type="taxonomic scope" value="Bacteria"/>
</dbReference>
<dbReference type="HOGENOM" id="CLU_000395_3_2_6"/>
<dbReference type="OMA" id="FINKPKH"/>
<dbReference type="UniPathway" id="UPA00655">
    <property type="reaction ID" value="UER00711"/>
</dbReference>
<dbReference type="Proteomes" id="UP000000558">
    <property type="component" value="Chromosome"/>
</dbReference>
<dbReference type="Proteomes" id="UP000002519">
    <property type="component" value="Chromosome"/>
</dbReference>
<dbReference type="GO" id="GO:0003989">
    <property type="term" value="F:acetyl-CoA carboxylase activity"/>
    <property type="evidence" value="ECO:0007669"/>
    <property type="project" value="UniProtKB-EC"/>
</dbReference>
<dbReference type="GO" id="GO:0005524">
    <property type="term" value="F:ATP binding"/>
    <property type="evidence" value="ECO:0007669"/>
    <property type="project" value="UniProtKB-KW"/>
</dbReference>
<dbReference type="GO" id="GO:0004075">
    <property type="term" value="F:biotin carboxylase activity"/>
    <property type="evidence" value="ECO:0007669"/>
    <property type="project" value="UniProtKB-EC"/>
</dbReference>
<dbReference type="GO" id="GO:0046872">
    <property type="term" value="F:metal ion binding"/>
    <property type="evidence" value="ECO:0007669"/>
    <property type="project" value="UniProtKB-KW"/>
</dbReference>
<dbReference type="GO" id="GO:0006633">
    <property type="term" value="P:fatty acid biosynthetic process"/>
    <property type="evidence" value="ECO:0007669"/>
    <property type="project" value="UniProtKB-KW"/>
</dbReference>
<dbReference type="GO" id="GO:2001295">
    <property type="term" value="P:malonyl-CoA biosynthetic process"/>
    <property type="evidence" value="ECO:0007669"/>
    <property type="project" value="UniProtKB-UniPathway"/>
</dbReference>
<dbReference type="FunFam" id="3.30.1490.20:FF:000012">
    <property type="entry name" value="Biotin carboxylase"/>
    <property type="match status" value="1"/>
</dbReference>
<dbReference type="FunFam" id="3.30.470.20:FF:000021">
    <property type="entry name" value="Biotin carboxylase"/>
    <property type="match status" value="1"/>
</dbReference>
<dbReference type="FunFam" id="3.30.470.20:FF:000023">
    <property type="entry name" value="Biotin carboxylase"/>
    <property type="match status" value="1"/>
</dbReference>
<dbReference type="FunFam" id="3.40.50.20:FF:000010">
    <property type="entry name" value="Propionyl-CoA carboxylase subunit alpha"/>
    <property type="match status" value="1"/>
</dbReference>
<dbReference type="Gene3D" id="3.30.1490.20">
    <property type="entry name" value="ATP-grasp fold, A domain"/>
    <property type="match status" value="1"/>
</dbReference>
<dbReference type="Gene3D" id="3.30.470.20">
    <property type="entry name" value="ATP-grasp fold, B domain"/>
    <property type="match status" value="2"/>
</dbReference>
<dbReference type="InterPro" id="IPR051602">
    <property type="entry name" value="ACC_Biotin_Carboxylase"/>
</dbReference>
<dbReference type="InterPro" id="IPR004549">
    <property type="entry name" value="Acetyl_CoA_COase_biotin_COase"/>
</dbReference>
<dbReference type="InterPro" id="IPR011761">
    <property type="entry name" value="ATP-grasp"/>
</dbReference>
<dbReference type="InterPro" id="IPR013815">
    <property type="entry name" value="ATP_grasp_subdomain_1"/>
</dbReference>
<dbReference type="InterPro" id="IPR005481">
    <property type="entry name" value="BC-like_N"/>
</dbReference>
<dbReference type="InterPro" id="IPR011764">
    <property type="entry name" value="Biotin_carboxylation_dom"/>
</dbReference>
<dbReference type="InterPro" id="IPR005482">
    <property type="entry name" value="Biotin_COase_C"/>
</dbReference>
<dbReference type="InterPro" id="IPR005479">
    <property type="entry name" value="CbamoylP_synth_lsu-like_ATP-bd"/>
</dbReference>
<dbReference type="InterPro" id="IPR016185">
    <property type="entry name" value="PreATP-grasp_dom_sf"/>
</dbReference>
<dbReference type="InterPro" id="IPR011054">
    <property type="entry name" value="Rudment_hybrid_motif"/>
</dbReference>
<dbReference type="NCBIfam" id="TIGR00514">
    <property type="entry name" value="accC"/>
    <property type="match status" value="1"/>
</dbReference>
<dbReference type="NCBIfam" id="NF006367">
    <property type="entry name" value="PRK08591.1"/>
    <property type="match status" value="1"/>
</dbReference>
<dbReference type="PANTHER" id="PTHR48095:SF2">
    <property type="entry name" value="BIOTIN CARBOXYLASE, CHLOROPLASTIC"/>
    <property type="match status" value="1"/>
</dbReference>
<dbReference type="PANTHER" id="PTHR48095">
    <property type="entry name" value="PYRUVATE CARBOXYLASE SUBUNIT A"/>
    <property type="match status" value="1"/>
</dbReference>
<dbReference type="Pfam" id="PF02785">
    <property type="entry name" value="Biotin_carb_C"/>
    <property type="match status" value="1"/>
</dbReference>
<dbReference type="Pfam" id="PF00289">
    <property type="entry name" value="Biotin_carb_N"/>
    <property type="match status" value="1"/>
</dbReference>
<dbReference type="Pfam" id="PF02786">
    <property type="entry name" value="CPSase_L_D2"/>
    <property type="match status" value="1"/>
</dbReference>
<dbReference type="SMART" id="SM00878">
    <property type="entry name" value="Biotin_carb_C"/>
    <property type="match status" value="1"/>
</dbReference>
<dbReference type="SUPFAM" id="SSF56059">
    <property type="entry name" value="Glutathione synthetase ATP-binding domain-like"/>
    <property type="match status" value="1"/>
</dbReference>
<dbReference type="SUPFAM" id="SSF52440">
    <property type="entry name" value="PreATP-grasp domain"/>
    <property type="match status" value="1"/>
</dbReference>
<dbReference type="SUPFAM" id="SSF51246">
    <property type="entry name" value="Rudiment single hybrid motif"/>
    <property type="match status" value="1"/>
</dbReference>
<dbReference type="PROSITE" id="PS50975">
    <property type="entry name" value="ATP_GRASP"/>
    <property type="match status" value="1"/>
</dbReference>
<dbReference type="PROSITE" id="PS50979">
    <property type="entry name" value="BC"/>
    <property type="match status" value="1"/>
</dbReference>
<dbReference type="PROSITE" id="PS00866">
    <property type="entry name" value="CPSASE_1"/>
    <property type="match status" value="1"/>
</dbReference>
<dbReference type="PROSITE" id="PS00867">
    <property type="entry name" value="CPSASE_2"/>
    <property type="match status" value="1"/>
</dbReference>
<proteinExistence type="inferred from homology"/>
<keyword id="KW-0067">ATP-binding</keyword>
<keyword id="KW-0092">Biotin</keyword>
<keyword id="KW-0275">Fatty acid biosynthesis</keyword>
<keyword id="KW-0276">Fatty acid metabolism</keyword>
<keyword id="KW-0436">Ligase</keyword>
<keyword id="KW-0444">Lipid biosynthesis</keyword>
<keyword id="KW-0443">Lipid metabolism</keyword>
<keyword id="KW-0460">Magnesium</keyword>
<keyword id="KW-0464">Manganese</keyword>
<keyword id="KW-0479">Metal-binding</keyword>
<keyword id="KW-0547">Nucleotide-binding</keyword>
<keyword id="KW-1185">Reference proteome</keyword>
<sequence length="449" mass="49337">MLDKIVIANRGEIALRILRACKELGIKTVAVHSSADRDLKHVLLADETVCIGPAPSVKSYLNIPAIISAAEITGAVAIHPGYGFLSENANFAEQVERSGFIFIGPKAETIRLMGDKVSAIAAMKKAGVPCVPGSDGPLGDDMDKNRAIAKRIGYPVIIKASGGGGGRGMRVVRGDAELAQSISMTRAEAKAAFSNDMVYMEKYLENPRHVEIQVLADGQGNSIYLAERDCSMQRRHQKVVEEAPAPGITPELRRYIGERCAKACVDIGYRGAGTFEFLFENGEFYFIEMNTRIQVEHPVTEMITGVDLIKEQLRIAAGQPLSIKQEEVHVRGHAVECRINAEDPNTFLPSPGKITRFHAPGGFGVRWESHIYAGYTVPPYYDSMIGKLICYGENRDVAIARMKNALQELIIDGIKTNVDLQIRIMNDENFQHGGTNIHYLEKKLGLQEK</sequence>
<evidence type="ECO:0000250" key="1">
    <source>
        <dbReference type="UniProtKB" id="P24182"/>
    </source>
</evidence>
<evidence type="ECO:0000255" key="2">
    <source>
        <dbReference type="PROSITE-ProRule" id="PRU00409"/>
    </source>
</evidence>
<evidence type="ECO:0000305" key="3"/>
<feature type="chain" id="PRO_0000146792" description="Biotin carboxylase">
    <location>
        <begin position="1"/>
        <end position="449"/>
    </location>
</feature>
<feature type="domain" description="Biotin carboxylation">
    <location>
        <begin position="1"/>
        <end position="445"/>
    </location>
</feature>
<feature type="domain" description="ATP-grasp" evidence="2">
    <location>
        <begin position="120"/>
        <end position="317"/>
    </location>
</feature>
<feature type="active site" evidence="1">
    <location>
        <position position="292"/>
    </location>
</feature>
<feature type="binding site" evidence="1">
    <location>
        <position position="116"/>
    </location>
    <ligand>
        <name>ATP</name>
        <dbReference type="ChEBI" id="CHEBI:30616"/>
    </ligand>
</feature>
<feature type="binding site" evidence="1">
    <location>
        <position position="159"/>
    </location>
    <ligand>
        <name>ATP</name>
        <dbReference type="ChEBI" id="CHEBI:30616"/>
    </ligand>
</feature>
<feature type="binding site" evidence="1">
    <location>
        <begin position="165"/>
        <end position="166"/>
    </location>
    <ligand>
        <name>ATP</name>
        <dbReference type="ChEBI" id="CHEBI:30616"/>
    </ligand>
</feature>
<feature type="binding site" evidence="1">
    <location>
        <begin position="201"/>
        <end position="204"/>
    </location>
    <ligand>
        <name>ATP</name>
        <dbReference type="ChEBI" id="CHEBI:30616"/>
    </ligand>
</feature>
<feature type="binding site" evidence="1">
    <location>
        <position position="209"/>
    </location>
    <ligand>
        <name>ATP</name>
        <dbReference type="ChEBI" id="CHEBI:30616"/>
    </ligand>
</feature>
<feature type="binding site" evidence="1">
    <location>
        <position position="236"/>
    </location>
    <ligand>
        <name>ATP</name>
        <dbReference type="ChEBI" id="CHEBI:30616"/>
    </ligand>
</feature>
<feature type="binding site" evidence="1">
    <location>
        <position position="238"/>
    </location>
    <ligand>
        <name>hydrogencarbonate</name>
        <dbReference type="ChEBI" id="CHEBI:17544"/>
    </ligand>
</feature>
<feature type="binding site" evidence="1">
    <location>
        <position position="276"/>
    </location>
    <ligand>
        <name>ATP</name>
        <dbReference type="ChEBI" id="CHEBI:30616"/>
    </ligand>
</feature>
<feature type="binding site" evidence="2">
    <location>
        <position position="276"/>
    </location>
    <ligand>
        <name>Mg(2+)</name>
        <dbReference type="ChEBI" id="CHEBI:18420"/>
        <label>1</label>
    </ligand>
</feature>
<feature type="binding site" evidence="2">
    <location>
        <position position="276"/>
    </location>
    <ligand>
        <name>Mn(2+)</name>
        <dbReference type="ChEBI" id="CHEBI:29035"/>
        <label>1</label>
    </ligand>
</feature>
<feature type="binding site" evidence="1">
    <location>
        <position position="288"/>
    </location>
    <ligand>
        <name>ATP</name>
        <dbReference type="ChEBI" id="CHEBI:30616"/>
    </ligand>
</feature>
<feature type="binding site" evidence="2">
    <location>
        <position position="288"/>
    </location>
    <ligand>
        <name>Mg(2+)</name>
        <dbReference type="ChEBI" id="CHEBI:18420"/>
        <label>1</label>
    </ligand>
</feature>
<feature type="binding site" evidence="2">
    <location>
        <position position="288"/>
    </location>
    <ligand>
        <name>Mg(2+)</name>
        <dbReference type="ChEBI" id="CHEBI:18420"/>
        <label>2</label>
    </ligand>
</feature>
<feature type="binding site" evidence="2">
    <location>
        <position position="288"/>
    </location>
    <ligand>
        <name>Mn(2+)</name>
        <dbReference type="ChEBI" id="CHEBI:29035"/>
        <label>1</label>
    </ligand>
</feature>
<feature type="binding site" evidence="2">
    <location>
        <position position="288"/>
    </location>
    <ligand>
        <name>Mn(2+)</name>
        <dbReference type="ChEBI" id="CHEBI:29035"/>
        <label>2</label>
    </ligand>
</feature>
<feature type="binding site" evidence="2">
    <location>
        <position position="290"/>
    </location>
    <ligand>
        <name>Mg(2+)</name>
        <dbReference type="ChEBI" id="CHEBI:18420"/>
        <label>2</label>
    </ligand>
</feature>
<feature type="binding site" evidence="2">
    <location>
        <position position="290"/>
    </location>
    <ligand>
        <name>Mn(2+)</name>
        <dbReference type="ChEBI" id="CHEBI:29035"/>
        <label>2</label>
    </ligand>
</feature>
<feature type="binding site" evidence="1">
    <location>
        <position position="292"/>
    </location>
    <ligand>
        <name>hydrogencarbonate</name>
        <dbReference type="ChEBI" id="CHEBI:17544"/>
    </ligand>
</feature>
<feature type="binding site" evidence="1">
    <location>
        <position position="295"/>
    </location>
    <ligand>
        <name>hydrogencarbonate</name>
        <dbReference type="ChEBI" id="CHEBI:17544"/>
    </ligand>
</feature>
<feature type="binding site" evidence="1">
    <location>
        <position position="338"/>
    </location>
    <ligand>
        <name>biotin</name>
        <dbReference type="ChEBI" id="CHEBI:57586"/>
    </ligand>
</feature>
<feature type="binding site" evidence="1">
    <location>
        <position position="338"/>
    </location>
    <ligand>
        <name>hydrogencarbonate</name>
        <dbReference type="ChEBI" id="CHEBI:17544"/>
    </ligand>
</feature>
<protein>
    <recommendedName>
        <fullName>Biotin carboxylase</fullName>
        <ecNumber evidence="1">6.3.4.14</ecNumber>
    </recommendedName>
    <alternativeName>
        <fullName evidence="3">Acetyl-coenzyme A carboxylase biotin carboxylase subunit A</fullName>
    </alternativeName>
</protein>
<accession>Q8X9B6</accession>
<comment type="function">
    <text evidence="1">This protein is a component of the acetyl coenzyme A carboxylase complex; first, biotin carboxylase catalyzes the carboxylation of the carrier protein and then the transcarboxylase transfers the carboxyl group to form malonyl-CoA.</text>
</comment>
<comment type="catalytic activity">
    <reaction evidence="1">
        <text>N(6)-biotinyl-L-lysyl-[protein] + hydrogencarbonate + ATP = N(6)-carboxybiotinyl-L-lysyl-[protein] + ADP + phosphate + H(+)</text>
        <dbReference type="Rhea" id="RHEA:13501"/>
        <dbReference type="Rhea" id="RHEA-COMP:10505"/>
        <dbReference type="Rhea" id="RHEA-COMP:10506"/>
        <dbReference type="ChEBI" id="CHEBI:15378"/>
        <dbReference type="ChEBI" id="CHEBI:17544"/>
        <dbReference type="ChEBI" id="CHEBI:30616"/>
        <dbReference type="ChEBI" id="CHEBI:43474"/>
        <dbReference type="ChEBI" id="CHEBI:83144"/>
        <dbReference type="ChEBI" id="CHEBI:83145"/>
        <dbReference type="ChEBI" id="CHEBI:456216"/>
        <dbReference type="EC" id="6.3.4.14"/>
    </reaction>
</comment>
<comment type="cofactor">
    <cofactor evidence="2">
        <name>Mg(2+)</name>
        <dbReference type="ChEBI" id="CHEBI:18420"/>
    </cofactor>
    <cofactor evidence="2">
        <name>Mn(2+)</name>
        <dbReference type="ChEBI" id="CHEBI:29035"/>
    </cofactor>
    <text evidence="2">Binds 2 magnesium or manganese ions per subunit.</text>
</comment>
<comment type="pathway">
    <text evidence="1">Lipid metabolism; malonyl-CoA biosynthesis; malonyl-CoA from acetyl-CoA: step 1/1.</text>
</comment>
<comment type="subunit">
    <text evidence="1">Acetyl-CoA carboxylase is a heterohexamer of biotin carboxyl carrier protein, biotin carboxylase and the two subunits of carboxyl transferase in a 2:2 complex.</text>
</comment>